<protein>
    <recommendedName>
        <fullName evidence="1">Probable transaldolase</fullName>
        <ecNumber evidence="1">2.2.1.2</ecNumber>
    </recommendedName>
</protein>
<organism>
    <name type="scientific">Myxococcus xanthus (strain DK1622)</name>
    <dbReference type="NCBI Taxonomy" id="246197"/>
    <lineage>
        <taxon>Bacteria</taxon>
        <taxon>Pseudomonadati</taxon>
        <taxon>Myxococcota</taxon>
        <taxon>Myxococcia</taxon>
        <taxon>Myxococcales</taxon>
        <taxon>Cystobacterineae</taxon>
        <taxon>Myxococcaceae</taxon>
        <taxon>Myxococcus</taxon>
    </lineage>
</organism>
<proteinExistence type="inferred from homology"/>
<gene>
    <name evidence="1" type="primary">tal</name>
    <name type="ordered locus">MXAN_5922</name>
</gene>
<comment type="function">
    <text evidence="1">Transaldolase is important for the balance of metabolites in the pentose-phosphate pathway.</text>
</comment>
<comment type="catalytic activity">
    <reaction evidence="1">
        <text>D-sedoheptulose 7-phosphate + D-glyceraldehyde 3-phosphate = D-erythrose 4-phosphate + beta-D-fructose 6-phosphate</text>
        <dbReference type="Rhea" id="RHEA:17053"/>
        <dbReference type="ChEBI" id="CHEBI:16897"/>
        <dbReference type="ChEBI" id="CHEBI:57483"/>
        <dbReference type="ChEBI" id="CHEBI:57634"/>
        <dbReference type="ChEBI" id="CHEBI:59776"/>
        <dbReference type="EC" id="2.2.1.2"/>
    </reaction>
</comment>
<comment type="pathway">
    <text evidence="1">Carbohydrate degradation; pentose phosphate pathway; D-glyceraldehyde 3-phosphate and beta-D-fructose 6-phosphate from D-ribose 5-phosphate and D-xylulose 5-phosphate (non-oxidative stage): step 2/3.</text>
</comment>
<comment type="subcellular location">
    <subcellularLocation>
        <location evidence="1">Cytoplasm</location>
    </subcellularLocation>
</comment>
<comment type="similarity">
    <text evidence="1">Belongs to the transaldolase family. Type 3B subfamily.</text>
</comment>
<dbReference type="EC" id="2.2.1.2" evidence="1"/>
<dbReference type="EMBL" id="CP000113">
    <property type="protein sequence ID" value="ABF91410.1"/>
    <property type="molecule type" value="Genomic_DNA"/>
</dbReference>
<dbReference type="SMR" id="Q1CZW4"/>
<dbReference type="STRING" id="246197.MXAN_5922"/>
<dbReference type="EnsemblBacteria" id="ABF91410">
    <property type="protein sequence ID" value="ABF91410"/>
    <property type="gene ID" value="MXAN_5922"/>
</dbReference>
<dbReference type="GeneID" id="41363160"/>
<dbReference type="KEGG" id="mxa:MXAN_5922"/>
<dbReference type="eggNOG" id="COG0176">
    <property type="taxonomic scope" value="Bacteria"/>
</dbReference>
<dbReference type="HOGENOM" id="CLU_079764_0_0_7"/>
<dbReference type="OrthoDB" id="9807051at2"/>
<dbReference type="UniPathway" id="UPA00115">
    <property type="reaction ID" value="UER00414"/>
</dbReference>
<dbReference type="Proteomes" id="UP000002402">
    <property type="component" value="Chromosome"/>
</dbReference>
<dbReference type="GO" id="GO:0005737">
    <property type="term" value="C:cytoplasm"/>
    <property type="evidence" value="ECO:0007669"/>
    <property type="project" value="UniProtKB-SubCell"/>
</dbReference>
<dbReference type="GO" id="GO:0016832">
    <property type="term" value="F:aldehyde-lyase activity"/>
    <property type="evidence" value="ECO:0007669"/>
    <property type="project" value="InterPro"/>
</dbReference>
<dbReference type="GO" id="GO:0004801">
    <property type="term" value="F:transaldolase activity"/>
    <property type="evidence" value="ECO:0007669"/>
    <property type="project" value="UniProtKB-UniRule"/>
</dbReference>
<dbReference type="GO" id="GO:0005975">
    <property type="term" value="P:carbohydrate metabolic process"/>
    <property type="evidence" value="ECO:0007669"/>
    <property type="project" value="InterPro"/>
</dbReference>
<dbReference type="GO" id="GO:0006098">
    <property type="term" value="P:pentose-phosphate shunt"/>
    <property type="evidence" value="ECO:0007669"/>
    <property type="project" value="UniProtKB-UniRule"/>
</dbReference>
<dbReference type="CDD" id="cd00956">
    <property type="entry name" value="Transaldolase_FSA"/>
    <property type="match status" value="1"/>
</dbReference>
<dbReference type="FunFam" id="3.20.20.70:FF:000018">
    <property type="entry name" value="Probable transaldolase"/>
    <property type="match status" value="1"/>
</dbReference>
<dbReference type="Gene3D" id="3.20.20.70">
    <property type="entry name" value="Aldolase class I"/>
    <property type="match status" value="1"/>
</dbReference>
<dbReference type="HAMAP" id="MF_00494">
    <property type="entry name" value="Transaldolase_3b"/>
    <property type="match status" value="1"/>
</dbReference>
<dbReference type="InterPro" id="IPR013785">
    <property type="entry name" value="Aldolase_TIM"/>
</dbReference>
<dbReference type="InterPro" id="IPR001585">
    <property type="entry name" value="TAL/FSA"/>
</dbReference>
<dbReference type="InterPro" id="IPR022999">
    <property type="entry name" value="Transaldolase_3B"/>
</dbReference>
<dbReference type="InterPro" id="IPR004731">
    <property type="entry name" value="Transaldolase_3B/F6P_aldolase"/>
</dbReference>
<dbReference type="InterPro" id="IPR018225">
    <property type="entry name" value="Transaldolase_AS"/>
</dbReference>
<dbReference type="InterPro" id="IPR033919">
    <property type="entry name" value="TSA/FSA_arc/bac"/>
</dbReference>
<dbReference type="NCBIfam" id="TIGR00875">
    <property type="entry name" value="fsa_talC_mipB"/>
    <property type="match status" value="1"/>
</dbReference>
<dbReference type="PANTHER" id="PTHR10683:SF40">
    <property type="entry name" value="FRUCTOSE-6-PHOSPHATE ALDOLASE 1-RELATED"/>
    <property type="match status" value="1"/>
</dbReference>
<dbReference type="PANTHER" id="PTHR10683">
    <property type="entry name" value="TRANSALDOLASE"/>
    <property type="match status" value="1"/>
</dbReference>
<dbReference type="Pfam" id="PF00923">
    <property type="entry name" value="TAL_FSA"/>
    <property type="match status" value="1"/>
</dbReference>
<dbReference type="SUPFAM" id="SSF51569">
    <property type="entry name" value="Aldolase"/>
    <property type="match status" value="1"/>
</dbReference>
<dbReference type="PROSITE" id="PS01054">
    <property type="entry name" value="TRANSALDOLASE_1"/>
    <property type="match status" value="1"/>
</dbReference>
<accession>Q1CZW4</accession>
<keyword id="KW-0963">Cytoplasm</keyword>
<keyword id="KW-0570">Pentose shunt</keyword>
<keyword id="KW-1185">Reference proteome</keyword>
<keyword id="KW-0704">Schiff base</keyword>
<keyword id="KW-0808">Transferase</keyword>
<reference key="1">
    <citation type="journal article" date="2006" name="Proc. Natl. Acad. Sci. U.S.A.">
        <title>Evolution of sensory complexity recorded in a myxobacterial genome.</title>
        <authorList>
            <person name="Goldman B.S."/>
            <person name="Nierman W.C."/>
            <person name="Kaiser D."/>
            <person name="Slater S.C."/>
            <person name="Durkin A.S."/>
            <person name="Eisen J.A."/>
            <person name="Ronning C.M."/>
            <person name="Barbazuk W.B."/>
            <person name="Blanchard M."/>
            <person name="Field C."/>
            <person name="Halling C."/>
            <person name="Hinkle G."/>
            <person name="Iartchuk O."/>
            <person name="Kim H.S."/>
            <person name="Mackenzie C."/>
            <person name="Madupu R."/>
            <person name="Miller N."/>
            <person name="Shvartsbeyn A."/>
            <person name="Sullivan S.A."/>
            <person name="Vaudin M."/>
            <person name="Wiegand R."/>
            <person name="Kaplan H.B."/>
        </authorList>
    </citation>
    <scope>NUCLEOTIDE SEQUENCE [LARGE SCALE GENOMIC DNA]</scope>
    <source>
        <strain>DK1622</strain>
    </source>
</reference>
<name>TAL_MYXXD</name>
<evidence type="ECO:0000255" key="1">
    <source>
        <dbReference type="HAMAP-Rule" id="MF_00494"/>
    </source>
</evidence>
<feature type="chain" id="PRO_1000126331" description="Probable transaldolase">
    <location>
        <begin position="1"/>
        <end position="223"/>
    </location>
</feature>
<feature type="active site" description="Schiff-base intermediate with substrate" evidence="1">
    <location>
        <position position="83"/>
    </location>
</feature>
<sequence>MKFFIDSADVEEIRKAHAMGCVDGVTTNPSLLAKVGRGLEETIREICSIVDGPISAECVSMEADELIKEGRSLAKIHDNVVVKIPMGVEGMKATKALTAEGIRTNVTLCFSANQALLCAKAGATYVSPFVGRLDDISQDGMELISHILEIYRNYEHFNTQVLVASVRNPVHVLQAARLGADVATLPYNVITQLANHPLTDAGIKKFLADWEKVPKAAKPPAAK</sequence>